<comment type="function">
    <text evidence="1">Catalyzes the phosphorylation of the hydroxyl group of 4-methyl-5-beta-hydroxyethylthiazole (THZ).</text>
</comment>
<comment type="catalytic activity">
    <reaction evidence="1">
        <text>5-(2-hydroxyethyl)-4-methylthiazole + ATP = 4-methyl-5-(2-phosphooxyethyl)-thiazole + ADP + H(+)</text>
        <dbReference type="Rhea" id="RHEA:24212"/>
        <dbReference type="ChEBI" id="CHEBI:15378"/>
        <dbReference type="ChEBI" id="CHEBI:17957"/>
        <dbReference type="ChEBI" id="CHEBI:30616"/>
        <dbReference type="ChEBI" id="CHEBI:58296"/>
        <dbReference type="ChEBI" id="CHEBI:456216"/>
        <dbReference type="EC" id="2.7.1.50"/>
    </reaction>
</comment>
<comment type="cofactor">
    <cofactor evidence="1">
        <name>Mg(2+)</name>
        <dbReference type="ChEBI" id="CHEBI:18420"/>
    </cofactor>
</comment>
<comment type="pathway">
    <text evidence="1">Cofactor biosynthesis; thiamine diphosphate biosynthesis; 4-methyl-5-(2-phosphoethyl)-thiazole from 5-(2-hydroxyethyl)-4-methylthiazole: step 1/1.</text>
</comment>
<comment type="similarity">
    <text evidence="1">Belongs to the Thz kinase family.</text>
</comment>
<name>THIM_ALIF1</name>
<reference key="1">
    <citation type="journal article" date="2005" name="Proc. Natl. Acad. Sci. U.S.A.">
        <title>Complete genome sequence of Vibrio fischeri: a symbiotic bacterium with pathogenic congeners.</title>
        <authorList>
            <person name="Ruby E.G."/>
            <person name="Urbanowski M."/>
            <person name="Campbell J."/>
            <person name="Dunn A."/>
            <person name="Faini M."/>
            <person name="Gunsalus R."/>
            <person name="Lostroh P."/>
            <person name="Lupp C."/>
            <person name="McCann J."/>
            <person name="Millikan D."/>
            <person name="Schaefer A."/>
            <person name="Stabb E."/>
            <person name="Stevens A."/>
            <person name="Visick K."/>
            <person name="Whistler C."/>
            <person name="Greenberg E.P."/>
        </authorList>
    </citation>
    <scope>NUCLEOTIDE SEQUENCE [LARGE SCALE GENOMIC DNA]</scope>
    <source>
        <strain>ATCC 700601 / ES114</strain>
    </source>
</reference>
<protein>
    <recommendedName>
        <fullName evidence="1">Hydroxyethylthiazole kinase</fullName>
        <ecNumber evidence="1">2.7.1.50</ecNumber>
    </recommendedName>
    <alternativeName>
        <fullName evidence="1">4-methyl-5-beta-hydroxyethylthiazole kinase</fullName>
        <shortName evidence="1">TH kinase</shortName>
        <shortName evidence="1">Thz kinase</shortName>
    </alternativeName>
</protein>
<dbReference type="EC" id="2.7.1.50" evidence="1"/>
<dbReference type="EMBL" id="CP000021">
    <property type="protein sequence ID" value="AAW87391.1"/>
    <property type="molecule type" value="Genomic_DNA"/>
</dbReference>
<dbReference type="RefSeq" id="WP_011263206.1">
    <property type="nucleotide sequence ID" value="NC_006841.2"/>
</dbReference>
<dbReference type="RefSeq" id="YP_206279.1">
    <property type="nucleotide sequence ID" value="NC_006841.2"/>
</dbReference>
<dbReference type="SMR" id="Q5E0Q5"/>
<dbReference type="STRING" id="312309.VF_A0321"/>
<dbReference type="EnsemblBacteria" id="AAW87391">
    <property type="protein sequence ID" value="AAW87391"/>
    <property type="gene ID" value="VF_A0321"/>
</dbReference>
<dbReference type="GeneID" id="54165642"/>
<dbReference type="KEGG" id="vfi:VF_A0321"/>
<dbReference type="PATRIC" id="fig|312309.11.peg.2925"/>
<dbReference type="eggNOG" id="COG2145">
    <property type="taxonomic scope" value="Bacteria"/>
</dbReference>
<dbReference type="HOGENOM" id="CLU_019943_0_1_6"/>
<dbReference type="OrthoDB" id="8909021at2"/>
<dbReference type="UniPathway" id="UPA00060">
    <property type="reaction ID" value="UER00139"/>
</dbReference>
<dbReference type="Proteomes" id="UP000000537">
    <property type="component" value="Chromosome II"/>
</dbReference>
<dbReference type="GO" id="GO:0005524">
    <property type="term" value="F:ATP binding"/>
    <property type="evidence" value="ECO:0007669"/>
    <property type="project" value="UniProtKB-UniRule"/>
</dbReference>
<dbReference type="GO" id="GO:0004417">
    <property type="term" value="F:hydroxyethylthiazole kinase activity"/>
    <property type="evidence" value="ECO:0007669"/>
    <property type="project" value="UniProtKB-UniRule"/>
</dbReference>
<dbReference type="GO" id="GO:0000287">
    <property type="term" value="F:magnesium ion binding"/>
    <property type="evidence" value="ECO:0007669"/>
    <property type="project" value="UniProtKB-UniRule"/>
</dbReference>
<dbReference type="GO" id="GO:0009228">
    <property type="term" value="P:thiamine biosynthetic process"/>
    <property type="evidence" value="ECO:0007669"/>
    <property type="project" value="UniProtKB-KW"/>
</dbReference>
<dbReference type="GO" id="GO:0009229">
    <property type="term" value="P:thiamine diphosphate biosynthetic process"/>
    <property type="evidence" value="ECO:0007669"/>
    <property type="project" value="UniProtKB-UniRule"/>
</dbReference>
<dbReference type="CDD" id="cd01170">
    <property type="entry name" value="THZ_kinase"/>
    <property type="match status" value="1"/>
</dbReference>
<dbReference type="Gene3D" id="3.40.1190.20">
    <property type="match status" value="1"/>
</dbReference>
<dbReference type="HAMAP" id="MF_00228">
    <property type="entry name" value="Thz_kinase"/>
    <property type="match status" value="1"/>
</dbReference>
<dbReference type="InterPro" id="IPR000417">
    <property type="entry name" value="Hyethyz_kinase"/>
</dbReference>
<dbReference type="InterPro" id="IPR029056">
    <property type="entry name" value="Ribokinase-like"/>
</dbReference>
<dbReference type="NCBIfam" id="NF006830">
    <property type="entry name" value="PRK09355.1"/>
    <property type="match status" value="1"/>
</dbReference>
<dbReference type="Pfam" id="PF02110">
    <property type="entry name" value="HK"/>
    <property type="match status" value="1"/>
</dbReference>
<dbReference type="PIRSF" id="PIRSF000513">
    <property type="entry name" value="Thz_kinase"/>
    <property type="match status" value="1"/>
</dbReference>
<dbReference type="PRINTS" id="PR01099">
    <property type="entry name" value="HYETHTZKNASE"/>
</dbReference>
<dbReference type="SUPFAM" id="SSF53613">
    <property type="entry name" value="Ribokinase-like"/>
    <property type="match status" value="1"/>
</dbReference>
<proteinExistence type="inferred from homology"/>
<keyword id="KW-0067">ATP-binding</keyword>
<keyword id="KW-0418">Kinase</keyword>
<keyword id="KW-0460">Magnesium</keyword>
<keyword id="KW-0479">Metal-binding</keyword>
<keyword id="KW-0547">Nucleotide-binding</keyword>
<keyword id="KW-1185">Reference proteome</keyword>
<keyword id="KW-0784">Thiamine biosynthesis</keyword>
<keyword id="KW-0808">Transferase</keyword>
<accession>Q5E0Q5</accession>
<evidence type="ECO:0000255" key="1">
    <source>
        <dbReference type="HAMAP-Rule" id="MF_00228"/>
    </source>
</evidence>
<gene>
    <name evidence="1" type="primary">thiM</name>
    <name type="ordered locus">VF_A0321</name>
</gene>
<organism>
    <name type="scientific">Aliivibrio fischeri (strain ATCC 700601 / ES114)</name>
    <name type="common">Vibrio fischeri</name>
    <dbReference type="NCBI Taxonomy" id="312309"/>
    <lineage>
        <taxon>Bacteria</taxon>
        <taxon>Pseudomonadati</taxon>
        <taxon>Pseudomonadota</taxon>
        <taxon>Gammaproteobacteria</taxon>
        <taxon>Vibrionales</taxon>
        <taxon>Vibrionaceae</taxon>
        <taxon>Aliivibrio</taxon>
    </lineage>
</organism>
<sequence>MTIMNIQYIVECLALLREKKPLVVNITNYVVMNNTANALLALGASPIMAHSQQEMAEMMSFSGALVINIGTLDSVWTPRMHFAVEQANLNNKAVVLDPVGCGASQLRTQVARQIAEAANKLIIRANASEVIALAGENAQSKGVDALDSSDSAVGAACYVAQKYQCSVVISGETDYIVTQDAQYKLNNGHAMMPFVTGMGCTHTALTGAFAAIGDESGVVATAVLGVAGEIAAEQSAGPGSLQMNLLDTLYQLDEETLTRRLKLTVNA</sequence>
<feature type="chain" id="PRO_0000336575" description="Hydroxyethylthiazole kinase">
    <location>
        <begin position="1"/>
        <end position="267"/>
    </location>
</feature>
<feature type="binding site" evidence="1">
    <location>
        <position position="48"/>
    </location>
    <ligand>
        <name>substrate</name>
    </ligand>
</feature>
<feature type="binding site" evidence="1">
    <location>
        <position position="124"/>
    </location>
    <ligand>
        <name>ATP</name>
        <dbReference type="ChEBI" id="CHEBI:30616"/>
    </ligand>
</feature>
<feature type="binding site" evidence="1">
    <location>
        <position position="170"/>
    </location>
    <ligand>
        <name>ATP</name>
        <dbReference type="ChEBI" id="CHEBI:30616"/>
    </ligand>
</feature>
<feature type="binding site" evidence="1">
    <location>
        <position position="197"/>
    </location>
    <ligand>
        <name>substrate</name>
    </ligand>
</feature>